<protein>
    <recommendedName>
        <fullName>Serine/threonine-protein kinase CHK1</fullName>
        <ecNumber>2.7.11.1</ecNumber>
    </recommendedName>
    <alternativeName>
        <fullName>Checkpoint kinase 1</fullName>
    </alternativeName>
</protein>
<organism>
    <name type="scientific">Mycosarcoma maydis</name>
    <name type="common">Corn smut fungus</name>
    <name type="synonym">Ustilago maydis</name>
    <dbReference type="NCBI Taxonomy" id="5270"/>
    <lineage>
        <taxon>Eukaryota</taxon>
        <taxon>Fungi</taxon>
        <taxon>Dikarya</taxon>
        <taxon>Basidiomycota</taxon>
        <taxon>Ustilaginomycotina</taxon>
        <taxon>Ustilaginomycetes</taxon>
        <taxon>Ustilaginales</taxon>
        <taxon>Ustilaginaceae</taxon>
        <taxon>Mycosarcoma</taxon>
    </lineage>
</organism>
<reference key="1">
    <citation type="journal article" date="2006" name="Nature">
        <title>Insights from the genome of the biotrophic fungal plant pathogen Ustilago maydis.</title>
        <authorList>
            <person name="Kaemper J."/>
            <person name="Kahmann R."/>
            <person name="Boelker M."/>
            <person name="Ma L.-J."/>
            <person name="Brefort T."/>
            <person name="Saville B.J."/>
            <person name="Banuett F."/>
            <person name="Kronstad J.W."/>
            <person name="Gold S.E."/>
            <person name="Mueller O."/>
            <person name="Perlin M.H."/>
            <person name="Woesten H.A.B."/>
            <person name="de Vries R."/>
            <person name="Ruiz-Herrera J."/>
            <person name="Reynaga-Pena C.G."/>
            <person name="Snetselaar K."/>
            <person name="McCann M."/>
            <person name="Perez-Martin J."/>
            <person name="Feldbruegge M."/>
            <person name="Basse C.W."/>
            <person name="Steinberg G."/>
            <person name="Ibeas J.I."/>
            <person name="Holloman W."/>
            <person name="Guzman P."/>
            <person name="Farman M.L."/>
            <person name="Stajich J.E."/>
            <person name="Sentandreu R."/>
            <person name="Gonzalez-Prieto J.M."/>
            <person name="Kennell J.C."/>
            <person name="Molina L."/>
            <person name="Schirawski J."/>
            <person name="Mendoza-Mendoza A."/>
            <person name="Greilinger D."/>
            <person name="Muench K."/>
            <person name="Roessel N."/>
            <person name="Scherer M."/>
            <person name="Vranes M."/>
            <person name="Ladendorf O."/>
            <person name="Vincon V."/>
            <person name="Fuchs U."/>
            <person name="Sandrock B."/>
            <person name="Meng S."/>
            <person name="Ho E.C.H."/>
            <person name="Cahill M.J."/>
            <person name="Boyce K.J."/>
            <person name="Klose J."/>
            <person name="Klosterman S.J."/>
            <person name="Deelstra H.J."/>
            <person name="Ortiz-Castellanos L."/>
            <person name="Li W."/>
            <person name="Sanchez-Alonso P."/>
            <person name="Schreier P.H."/>
            <person name="Haeuser-Hahn I."/>
            <person name="Vaupel M."/>
            <person name="Koopmann E."/>
            <person name="Friedrich G."/>
            <person name="Voss H."/>
            <person name="Schlueter T."/>
            <person name="Margolis J."/>
            <person name="Platt D."/>
            <person name="Swimmer C."/>
            <person name="Gnirke A."/>
            <person name="Chen F."/>
            <person name="Vysotskaia V."/>
            <person name="Mannhaupt G."/>
            <person name="Gueldener U."/>
            <person name="Muensterkoetter M."/>
            <person name="Haase D."/>
            <person name="Oesterheld M."/>
            <person name="Mewes H.-W."/>
            <person name="Mauceli E.W."/>
            <person name="DeCaprio D."/>
            <person name="Wade C.M."/>
            <person name="Butler J."/>
            <person name="Young S.K."/>
            <person name="Jaffe D.B."/>
            <person name="Calvo S.E."/>
            <person name="Nusbaum C."/>
            <person name="Galagan J.E."/>
            <person name="Birren B.W."/>
        </authorList>
    </citation>
    <scope>NUCLEOTIDE SEQUENCE [LARGE SCALE GENOMIC DNA]</scope>
    <source>
        <strain>DSM 14603 / FGSC 9021 / UM521</strain>
    </source>
</reference>
<reference key="2">
    <citation type="submission" date="2014-09" db="EMBL/GenBank/DDBJ databases">
        <authorList>
            <person name="Gueldener U."/>
            <person name="Muensterkoetter M."/>
            <person name="Walter M.C."/>
            <person name="Mannhaupt G."/>
            <person name="Kahmann R."/>
        </authorList>
    </citation>
    <scope>GENOME REANNOTATION</scope>
    <source>
        <strain>DSM 14603 / FGSC 9021 / UM521</strain>
    </source>
</reference>
<keyword id="KW-0067">ATP-binding</keyword>
<keyword id="KW-0418">Kinase</keyword>
<keyword id="KW-0547">Nucleotide-binding</keyword>
<keyword id="KW-0539">Nucleus</keyword>
<keyword id="KW-1185">Reference proteome</keyword>
<keyword id="KW-0723">Serine/threonine-protein kinase</keyword>
<keyword id="KW-0808">Transferase</keyword>
<proteinExistence type="inferred from homology"/>
<comment type="function">
    <text evidence="1">Serine/threonine-protein kinase which is required for checkpoint-mediated cell cycle arrest and activation of DNA repair in response to the presence of DNA damage or unreplicated DNA. May also negatively regulate cell cycle progression during unperturbed cell cycles (By similarity).</text>
</comment>
<comment type="catalytic activity">
    <reaction>
        <text>L-seryl-[protein] + ATP = O-phospho-L-seryl-[protein] + ADP + H(+)</text>
        <dbReference type="Rhea" id="RHEA:17989"/>
        <dbReference type="Rhea" id="RHEA-COMP:9863"/>
        <dbReference type="Rhea" id="RHEA-COMP:11604"/>
        <dbReference type="ChEBI" id="CHEBI:15378"/>
        <dbReference type="ChEBI" id="CHEBI:29999"/>
        <dbReference type="ChEBI" id="CHEBI:30616"/>
        <dbReference type="ChEBI" id="CHEBI:83421"/>
        <dbReference type="ChEBI" id="CHEBI:456216"/>
        <dbReference type="EC" id="2.7.11.1"/>
    </reaction>
</comment>
<comment type="catalytic activity">
    <reaction>
        <text>L-threonyl-[protein] + ATP = O-phospho-L-threonyl-[protein] + ADP + H(+)</text>
        <dbReference type="Rhea" id="RHEA:46608"/>
        <dbReference type="Rhea" id="RHEA-COMP:11060"/>
        <dbReference type="Rhea" id="RHEA-COMP:11605"/>
        <dbReference type="ChEBI" id="CHEBI:15378"/>
        <dbReference type="ChEBI" id="CHEBI:30013"/>
        <dbReference type="ChEBI" id="CHEBI:30616"/>
        <dbReference type="ChEBI" id="CHEBI:61977"/>
        <dbReference type="ChEBI" id="CHEBI:456216"/>
        <dbReference type="EC" id="2.7.11.1"/>
    </reaction>
</comment>
<comment type="subcellular location">
    <subcellularLocation>
        <location evidence="1">Nucleus</location>
    </subcellularLocation>
</comment>
<comment type="PTM">
    <text evidence="1">Phosphorylated.</text>
</comment>
<comment type="similarity">
    <text evidence="5">Belongs to the protein kinase superfamily. CAMK Ser/Thr protein kinase family. NIM1 subfamily.</text>
</comment>
<feature type="chain" id="PRO_0000232939" description="Serine/threonine-protein kinase CHK1">
    <location>
        <begin position="1"/>
        <end position="662"/>
    </location>
</feature>
<feature type="domain" description="Protein kinase" evidence="2">
    <location>
        <begin position="18"/>
        <end position="328"/>
    </location>
</feature>
<feature type="region of interest" description="Disordered" evidence="4">
    <location>
        <begin position="557"/>
        <end position="577"/>
    </location>
</feature>
<feature type="compositionally biased region" description="Polar residues" evidence="4">
    <location>
        <begin position="562"/>
        <end position="572"/>
    </location>
</feature>
<feature type="active site" description="Proton acceptor" evidence="2 3">
    <location>
        <position position="193"/>
    </location>
</feature>
<feature type="binding site" evidence="2">
    <location>
        <begin position="24"/>
        <end position="32"/>
    </location>
    <ligand>
        <name>ATP</name>
        <dbReference type="ChEBI" id="CHEBI:30616"/>
    </ligand>
</feature>
<feature type="binding site" evidence="2">
    <location>
        <position position="49"/>
    </location>
    <ligand>
        <name>ATP</name>
        <dbReference type="ChEBI" id="CHEBI:30616"/>
    </ligand>
</feature>
<accession>P0C198</accession>
<accession>A0A0D1DVT6</accession>
<accession>Q4P8S3</accession>
<name>CHK1_MYCMD</name>
<evidence type="ECO:0000250" key="1"/>
<evidence type="ECO:0000255" key="2">
    <source>
        <dbReference type="PROSITE-ProRule" id="PRU00159"/>
    </source>
</evidence>
<evidence type="ECO:0000255" key="3">
    <source>
        <dbReference type="PROSITE-ProRule" id="PRU10027"/>
    </source>
</evidence>
<evidence type="ECO:0000256" key="4">
    <source>
        <dbReference type="SAM" id="MobiDB-lite"/>
    </source>
</evidence>
<evidence type="ECO:0000305" key="5"/>
<dbReference type="EC" id="2.7.11.1"/>
<dbReference type="EMBL" id="CM003148">
    <property type="protein sequence ID" value="KIS68399.1"/>
    <property type="molecule type" value="Genomic_DNA"/>
</dbReference>
<dbReference type="RefSeq" id="XP_011390094.1">
    <property type="nucleotide sequence ID" value="XM_011391792.1"/>
</dbReference>
<dbReference type="SMR" id="P0C198"/>
<dbReference type="FunCoup" id="P0C198">
    <property type="interactions" value="363"/>
</dbReference>
<dbReference type="STRING" id="237631.P0C198"/>
<dbReference type="EnsemblFungi" id="KIS68399">
    <property type="protein sequence ID" value="KIS68399"/>
    <property type="gene ID" value="UMAG_11087"/>
</dbReference>
<dbReference type="GeneID" id="23567016"/>
<dbReference type="KEGG" id="uma:UMAG_11087"/>
<dbReference type="VEuPathDB" id="FungiDB:UMAG_11087"/>
<dbReference type="InParanoid" id="P0C198"/>
<dbReference type="OrthoDB" id="539158at2759"/>
<dbReference type="Proteomes" id="UP000000561">
    <property type="component" value="Chromosome 9"/>
</dbReference>
<dbReference type="GO" id="GO:0005737">
    <property type="term" value="C:cytoplasm"/>
    <property type="evidence" value="ECO:0000318"/>
    <property type="project" value="GO_Central"/>
</dbReference>
<dbReference type="GO" id="GO:0005634">
    <property type="term" value="C:nucleus"/>
    <property type="evidence" value="ECO:0000318"/>
    <property type="project" value="GO_Central"/>
</dbReference>
<dbReference type="GO" id="GO:0035861">
    <property type="term" value="C:site of double-strand break"/>
    <property type="evidence" value="ECO:0000318"/>
    <property type="project" value="GO_Central"/>
</dbReference>
<dbReference type="GO" id="GO:0005524">
    <property type="term" value="F:ATP binding"/>
    <property type="evidence" value="ECO:0007669"/>
    <property type="project" value="UniProtKB-KW"/>
</dbReference>
<dbReference type="GO" id="GO:0106310">
    <property type="term" value="F:protein serine kinase activity"/>
    <property type="evidence" value="ECO:0007669"/>
    <property type="project" value="RHEA"/>
</dbReference>
<dbReference type="GO" id="GO:0004674">
    <property type="term" value="F:protein serine/threonine kinase activity"/>
    <property type="evidence" value="ECO:0000318"/>
    <property type="project" value="GO_Central"/>
</dbReference>
<dbReference type="GO" id="GO:0007095">
    <property type="term" value="P:mitotic G2 DNA damage checkpoint signaling"/>
    <property type="evidence" value="ECO:0000318"/>
    <property type="project" value="GO_Central"/>
</dbReference>
<dbReference type="CDD" id="cd14069">
    <property type="entry name" value="STKc_Chk1"/>
    <property type="match status" value="1"/>
</dbReference>
<dbReference type="FunFam" id="1.10.510.10:FF:002351">
    <property type="entry name" value="CAMK CAMKL CHK1 protein kinase"/>
    <property type="match status" value="1"/>
</dbReference>
<dbReference type="Gene3D" id="3.30.200.20">
    <property type="entry name" value="Phosphorylase Kinase, domain 1"/>
    <property type="match status" value="1"/>
</dbReference>
<dbReference type="Gene3D" id="1.10.510.10">
    <property type="entry name" value="Transferase(Phosphotransferase) domain 1"/>
    <property type="match status" value="1"/>
</dbReference>
<dbReference type="InterPro" id="IPR034670">
    <property type="entry name" value="Chk1_catalytic_dom"/>
</dbReference>
<dbReference type="InterPro" id="IPR011009">
    <property type="entry name" value="Kinase-like_dom_sf"/>
</dbReference>
<dbReference type="InterPro" id="IPR000719">
    <property type="entry name" value="Prot_kinase_dom"/>
</dbReference>
<dbReference type="InterPro" id="IPR017441">
    <property type="entry name" value="Protein_kinase_ATP_BS"/>
</dbReference>
<dbReference type="InterPro" id="IPR008271">
    <property type="entry name" value="Ser/Thr_kinase_AS"/>
</dbReference>
<dbReference type="PANTHER" id="PTHR43895">
    <property type="entry name" value="CALCIUM/CALMODULIN-DEPENDENT PROTEIN KINASE KINASE-RELATED"/>
    <property type="match status" value="1"/>
</dbReference>
<dbReference type="PANTHER" id="PTHR43895:SF32">
    <property type="entry name" value="SERINE_THREONINE-PROTEIN KINASE CHK1"/>
    <property type="match status" value="1"/>
</dbReference>
<dbReference type="Pfam" id="PF00069">
    <property type="entry name" value="Pkinase"/>
    <property type="match status" value="1"/>
</dbReference>
<dbReference type="SMART" id="SM00220">
    <property type="entry name" value="S_TKc"/>
    <property type="match status" value="1"/>
</dbReference>
<dbReference type="SUPFAM" id="SSF56112">
    <property type="entry name" value="Protein kinase-like (PK-like)"/>
    <property type="match status" value="1"/>
</dbReference>
<dbReference type="PROSITE" id="PS00107">
    <property type="entry name" value="PROTEIN_KINASE_ATP"/>
    <property type="match status" value="1"/>
</dbReference>
<dbReference type="PROSITE" id="PS50011">
    <property type="entry name" value="PROTEIN_KINASE_DOM"/>
    <property type="match status" value="1"/>
</dbReference>
<dbReference type="PROSITE" id="PS00108">
    <property type="entry name" value="PROTEIN_KINASE_ST"/>
    <property type="match status" value="1"/>
</dbReference>
<sequence>MTIPKSSTGQSYPPVLDYRIVQLIGGGGFSKVFRAVNPSSESHSVAAIKVISYAPNRSNKYPIDRRALQKEVQVHSILKHPNVLEFLGAVERGVDKNGNAGKEKGILMGEAVATTKESIRARDKERQQMLSSPSHDQNYVPGLYMVLELGAGGDLFDKIAPDYGVEEDLAHFYFQQLLAGLEYIHSQGVTHRDIKPENMLLDAEGNLKIADFGLCSVYKYKGKERELTGACGSLPYIAPEMNGKPYRGEPVDVWSSGVVLFAMLVGSTPWDEPTSRSPEYSAYRTGKLFEYDPWPRIPQDALSLLKKMMHPTPEKRITFEGIRRHRWFKRANDLMTQKGKCNDPVNLAEKLLQGLAVSGDIIVEVNGAAAAAARRLDLHSDGQRAQVPENVSLTQPDAILTSSFDLAARAVARGWADDTGPGGGLPLPSSTAMPAFASDDMSRRLAMSQHISSRRAEFSTTASGSGYDMALPGASQFTQALNHFTQFEALTHVAGTGSSHLRFSPHLTRFFSSASAATILALIIDVLDRLAVLNAHQAIGDQEELELEEAYNFMADGEPETTVPSDDSSRPTGGSKRLLIGSRGARIRLKTMDRRKCVLRGEVYVENLAAPDSTSDSASAPDRNAAKCLVVMKKGKGDPLEWRRLFREVCRRPEIMQTIIST</sequence>
<gene>
    <name type="primary">CHK1</name>
    <name type="ORF">UMAG_11087</name>
</gene>